<organism>
    <name type="scientific">Salmonella paratyphi B (strain ATCC BAA-1250 / SPB7)</name>
    <dbReference type="NCBI Taxonomy" id="1016998"/>
    <lineage>
        <taxon>Bacteria</taxon>
        <taxon>Pseudomonadati</taxon>
        <taxon>Pseudomonadota</taxon>
        <taxon>Gammaproteobacteria</taxon>
        <taxon>Enterobacterales</taxon>
        <taxon>Enterobacteriaceae</taxon>
        <taxon>Salmonella</taxon>
    </lineage>
</organism>
<dbReference type="EC" id="2.1.2.13" evidence="1"/>
<dbReference type="EC" id="1.1.1.305" evidence="1"/>
<dbReference type="EMBL" id="CP000886">
    <property type="protein sequence ID" value="ABX66108.1"/>
    <property type="molecule type" value="Genomic_DNA"/>
</dbReference>
<dbReference type="RefSeq" id="WP_000648753.1">
    <property type="nucleotide sequence ID" value="NC_010102.1"/>
</dbReference>
<dbReference type="SMR" id="A9N5B2"/>
<dbReference type="KEGG" id="spq:SPAB_00682"/>
<dbReference type="PATRIC" id="fig|1016998.12.peg.642"/>
<dbReference type="HOGENOM" id="CLU_007383_23_2_6"/>
<dbReference type="BioCyc" id="SENT1016998:SPAB_RS02840-MONOMER"/>
<dbReference type="UniPathway" id="UPA00030"/>
<dbReference type="UniPathway" id="UPA00032">
    <property type="reaction ID" value="UER00492"/>
</dbReference>
<dbReference type="UniPathway" id="UPA00032">
    <property type="reaction ID" value="UER00494"/>
</dbReference>
<dbReference type="Proteomes" id="UP000008556">
    <property type="component" value="Chromosome"/>
</dbReference>
<dbReference type="GO" id="GO:0016020">
    <property type="term" value="C:membrane"/>
    <property type="evidence" value="ECO:0007669"/>
    <property type="project" value="GOC"/>
</dbReference>
<dbReference type="GO" id="GO:0016831">
    <property type="term" value="F:carboxy-lyase activity"/>
    <property type="evidence" value="ECO:0007669"/>
    <property type="project" value="InterPro"/>
</dbReference>
<dbReference type="GO" id="GO:0099619">
    <property type="term" value="F:UDP-4-amino-4-deoxy-L-arabinose formyltransferase activity"/>
    <property type="evidence" value="ECO:0007669"/>
    <property type="project" value="UniProtKB-EC"/>
</dbReference>
<dbReference type="GO" id="GO:0099618">
    <property type="term" value="F:UDP-glucuronate dehydrogenase activity"/>
    <property type="evidence" value="ECO:0007669"/>
    <property type="project" value="UniProtKB-EC"/>
</dbReference>
<dbReference type="GO" id="GO:0009245">
    <property type="term" value="P:lipid A biosynthetic process"/>
    <property type="evidence" value="ECO:0007669"/>
    <property type="project" value="UniProtKB-KW"/>
</dbReference>
<dbReference type="GO" id="GO:0009103">
    <property type="term" value="P:lipopolysaccharide biosynthetic process"/>
    <property type="evidence" value="ECO:0007669"/>
    <property type="project" value="UniProtKB-UniRule"/>
</dbReference>
<dbReference type="GO" id="GO:0046677">
    <property type="term" value="P:response to antibiotic"/>
    <property type="evidence" value="ECO:0007669"/>
    <property type="project" value="UniProtKB-KW"/>
</dbReference>
<dbReference type="CDD" id="cd08702">
    <property type="entry name" value="Arna_FMT_C"/>
    <property type="match status" value="1"/>
</dbReference>
<dbReference type="CDD" id="cd05257">
    <property type="entry name" value="Arna_like_SDR_e"/>
    <property type="match status" value="1"/>
</dbReference>
<dbReference type="FunFam" id="3.40.50.720:FF:000197">
    <property type="entry name" value="Bifunctional polymyxin resistance protein ArnA"/>
    <property type="match status" value="1"/>
</dbReference>
<dbReference type="Gene3D" id="3.40.50.12230">
    <property type="match status" value="1"/>
</dbReference>
<dbReference type="Gene3D" id="3.40.50.720">
    <property type="entry name" value="NAD(P)-binding Rossmann-like Domain"/>
    <property type="match status" value="1"/>
</dbReference>
<dbReference type="HAMAP" id="MF_01166">
    <property type="entry name" value="ArnA"/>
    <property type="match status" value="1"/>
</dbReference>
<dbReference type="InterPro" id="IPR045869">
    <property type="entry name" value="Arna-like_SDR_e"/>
</dbReference>
<dbReference type="InterPro" id="IPR021168">
    <property type="entry name" value="Bifun_polymyxin_resist_ArnA"/>
</dbReference>
<dbReference type="InterPro" id="IPR001509">
    <property type="entry name" value="Epimerase_deHydtase"/>
</dbReference>
<dbReference type="InterPro" id="IPR005793">
    <property type="entry name" value="Formyl_trans_C"/>
</dbReference>
<dbReference type="InterPro" id="IPR002376">
    <property type="entry name" value="Formyl_transf_N"/>
</dbReference>
<dbReference type="InterPro" id="IPR036477">
    <property type="entry name" value="Formyl_transf_N_sf"/>
</dbReference>
<dbReference type="InterPro" id="IPR011034">
    <property type="entry name" value="Formyl_transferase-like_C_sf"/>
</dbReference>
<dbReference type="InterPro" id="IPR050177">
    <property type="entry name" value="Lipid_A_modif_metabolic_enz"/>
</dbReference>
<dbReference type="InterPro" id="IPR036291">
    <property type="entry name" value="NAD(P)-bd_dom_sf"/>
</dbReference>
<dbReference type="NCBIfam" id="NF005414">
    <property type="entry name" value="PRK06988.1"/>
    <property type="match status" value="1"/>
</dbReference>
<dbReference type="NCBIfam" id="NF005998">
    <property type="entry name" value="PRK08125.1"/>
    <property type="match status" value="1"/>
</dbReference>
<dbReference type="NCBIfam" id="NF008872">
    <property type="entry name" value="PRK11908.1"/>
    <property type="match status" value="1"/>
</dbReference>
<dbReference type="PANTHER" id="PTHR43245">
    <property type="entry name" value="BIFUNCTIONAL POLYMYXIN RESISTANCE PROTEIN ARNA"/>
    <property type="match status" value="1"/>
</dbReference>
<dbReference type="PANTHER" id="PTHR43245:SF13">
    <property type="entry name" value="UDP-D-APIOSE_UDP-D-XYLOSE SYNTHASE 2"/>
    <property type="match status" value="1"/>
</dbReference>
<dbReference type="Pfam" id="PF01370">
    <property type="entry name" value="Epimerase"/>
    <property type="match status" value="1"/>
</dbReference>
<dbReference type="Pfam" id="PF02911">
    <property type="entry name" value="Formyl_trans_C"/>
    <property type="match status" value="1"/>
</dbReference>
<dbReference type="Pfam" id="PF00551">
    <property type="entry name" value="Formyl_trans_N"/>
    <property type="match status" value="1"/>
</dbReference>
<dbReference type="PIRSF" id="PIRSF036506">
    <property type="entry name" value="Bifun_polymyxin_resist_ArnA"/>
    <property type="match status" value="1"/>
</dbReference>
<dbReference type="SUPFAM" id="SSF50486">
    <property type="entry name" value="FMT C-terminal domain-like"/>
    <property type="match status" value="1"/>
</dbReference>
<dbReference type="SUPFAM" id="SSF53328">
    <property type="entry name" value="Formyltransferase"/>
    <property type="match status" value="1"/>
</dbReference>
<dbReference type="SUPFAM" id="SSF51735">
    <property type="entry name" value="NAD(P)-binding Rossmann-fold domains"/>
    <property type="match status" value="1"/>
</dbReference>
<keyword id="KW-0046">Antibiotic resistance</keyword>
<keyword id="KW-0441">Lipid A biosynthesis</keyword>
<keyword id="KW-0444">Lipid biosynthesis</keyword>
<keyword id="KW-0443">Lipid metabolism</keyword>
<keyword id="KW-0448">Lipopolysaccharide biosynthesis</keyword>
<keyword id="KW-0511">Multifunctional enzyme</keyword>
<keyword id="KW-0520">NAD</keyword>
<keyword id="KW-0560">Oxidoreductase</keyword>
<keyword id="KW-0808">Transferase</keyword>
<protein>
    <recommendedName>
        <fullName evidence="1">Bifunctional polymyxin resistance protein ArnA</fullName>
    </recommendedName>
    <domain>
        <recommendedName>
            <fullName evidence="1">UDP-4-amino-4-deoxy-L-arabinose formyltransferase</fullName>
            <ecNumber evidence="1">2.1.2.13</ecNumber>
        </recommendedName>
        <alternativeName>
            <fullName evidence="1">ArnAFT</fullName>
        </alternativeName>
        <alternativeName>
            <fullName evidence="1">UDP-L-Ara4N formyltransferase</fullName>
        </alternativeName>
    </domain>
    <domain>
        <recommendedName>
            <fullName evidence="1">UDP-glucuronic acid oxidase, UDP-4-keto-hexauronic acid decarboxylating</fullName>
            <ecNumber evidence="1">1.1.1.305</ecNumber>
        </recommendedName>
        <alternativeName>
            <fullName evidence="1">ArnADH</fullName>
        </alternativeName>
        <alternativeName>
            <fullName evidence="1">UDP-GlcUA decarboxylase</fullName>
        </alternativeName>
        <alternativeName>
            <fullName evidence="1">UDP-glucuronic acid dehydrogenase</fullName>
        </alternativeName>
    </domain>
</protein>
<feature type="chain" id="PRO_1000085381" description="Bifunctional polymyxin resistance protein ArnA">
    <location>
        <begin position="1"/>
        <end position="660"/>
    </location>
</feature>
<feature type="region of interest" description="Formyltransferase ArnAFT">
    <location>
        <begin position="1"/>
        <end position="304"/>
    </location>
</feature>
<feature type="region of interest" description="Dehydrogenase ArnADH">
    <location>
        <begin position="314"/>
        <end position="660"/>
    </location>
</feature>
<feature type="active site" description="Proton donor; for formyltransferase activity" evidence="1">
    <location>
        <position position="104"/>
    </location>
</feature>
<feature type="active site" description="Proton acceptor; for decarboxylase activity" evidence="1">
    <location>
        <position position="434"/>
    </location>
</feature>
<feature type="active site" description="Proton donor; for decarboxylase activity" evidence="1">
    <location>
        <position position="619"/>
    </location>
</feature>
<feature type="binding site" evidence="1">
    <location>
        <position position="114"/>
    </location>
    <ligand>
        <name>(6R)-10-formyltetrahydrofolate</name>
        <dbReference type="ChEBI" id="CHEBI:195366"/>
    </ligand>
</feature>
<feature type="binding site" evidence="1">
    <location>
        <begin position="136"/>
        <end position="140"/>
    </location>
    <ligand>
        <name>(6R)-10-formyltetrahydrofolate</name>
        <dbReference type="ChEBI" id="CHEBI:195366"/>
    </ligand>
</feature>
<feature type="binding site" evidence="1">
    <location>
        <position position="347"/>
    </location>
    <ligand>
        <name>NAD(+)</name>
        <dbReference type="ChEBI" id="CHEBI:57540"/>
    </ligand>
</feature>
<feature type="binding site" evidence="1">
    <location>
        <begin position="368"/>
        <end position="369"/>
    </location>
    <ligand>
        <name>NAD(+)</name>
        <dbReference type="ChEBI" id="CHEBI:57540"/>
    </ligand>
</feature>
<feature type="binding site" evidence="1">
    <location>
        <position position="393"/>
    </location>
    <ligand>
        <name>UDP-alpha-D-glucuronate</name>
        <dbReference type="ChEBI" id="CHEBI:58052"/>
    </ligand>
</feature>
<feature type="binding site" evidence="1">
    <location>
        <position position="398"/>
    </location>
    <ligand>
        <name>UDP-alpha-D-glucuronate</name>
        <dbReference type="ChEBI" id="CHEBI:58052"/>
    </ligand>
</feature>
<feature type="binding site" evidence="1">
    <location>
        <begin position="432"/>
        <end position="433"/>
    </location>
    <ligand>
        <name>UDP-alpha-D-glucuronate</name>
        <dbReference type="ChEBI" id="CHEBI:58052"/>
    </ligand>
</feature>
<feature type="binding site" evidence="1">
    <location>
        <position position="460"/>
    </location>
    <ligand>
        <name>UDP-alpha-D-glucuronate</name>
        <dbReference type="ChEBI" id="CHEBI:58052"/>
    </ligand>
</feature>
<feature type="binding site" evidence="1">
    <location>
        <position position="492"/>
    </location>
    <ligand>
        <name>UDP-alpha-D-glucuronate</name>
        <dbReference type="ChEBI" id="CHEBI:58052"/>
    </ligand>
</feature>
<feature type="binding site" evidence="1">
    <location>
        <begin position="526"/>
        <end position="535"/>
    </location>
    <ligand>
        <name>UDP-alpha-D-glucuronate</name>
        <dbReference type="ChEBI" id="CHEBI:58052"/>
    </ligand>
</feature>
<feature type="binding site" evidence="1">
    <location>
        <position position="613"/>
    </location>
    <ligand>
        <name>UDP-alpha-D-glucuronate</name>
        <dbReference type="ChEBI" id="CHEBI:58052"/>
    </ligand>
</feature>
<feature type="site" description="Transition state stabilizer" evidence="1">
    <location>
        <position position="102"/>
    </location>
</feature>
<feature type="site" description="Raises pKa of active site His" evidence="1">
    <location>
        <position position="140"/>
    </location>
</feature>
<sequence>MKAVIFAYHDMGCQGVQAVLDAGYDIAAIFTHADNPAENTFFGSVSRLAAGLGIPVYAPDNVNHPIWVDRIAELAPDIIFSFYYRNLLSEEILHLAPAGAFNLHGSLLPAYRGRAPLNWVLVNGESETGVTLHRMVKRADAGEIVASQRVAIAQDDVALTLHHKLCQAARQLLNSILPTMKCGDIPSVPQRESDATYYGRRRPEDGLIDWHKPVSTVHNLVRAVAAPWPGAFSYNGSQKFTIWSSRICPDAQGALPGSVISVSPLRVACADGALEIITGQAGDGITVQGSQLAQTLGLVAGARLNRPPATSGKRRIRVLILGVNGFIGNHLTERLLNEENYEVYGMDIGSNAISRFLLHPRFHFVEGDISIHSEWIEYHVKKCDVVLPLVAIATPIEYTRNPLRVFELDFEENLRIIRYCVKYRKRVVFPSTSEVYGMCTDASFDEDKSNLIVGPVNKPRWIYSVSKQLLDRVIWAYGEKEGLRFTLFRPFNWMGPRLDSLNAARIGSSRAITQLILNLVEGTPIKLIDGGQQKRCFTDIRDGIEALFRIIVNDGDRCDGKIINIGNPDNEASIQELATLLLDSFDKHPLRCHFPPFAGFQVVESRSYYGKGYQDVAHRKPSIDNARRCLGWEPSIAMRDTVEETLDFFLRSVDVAERAS</sequence>
<accession>A9N5B2</accession>
<reference key="1">
    <citation type="submission" date="2007-11" db="EMBL/GenBank/DDBJ databases">
        <authorList>
            <consortium name="The Salmonella enterica serovar Paratyphi B Genome Sequencing Project"/>
            <person name="McClelland M."/>
            <person name="Sanderson E.K."/>
            <person name="Porwollik S."/>
            <person name="Spieth J."/>
            <person name="Clifton W.S."/>
            <person name="Fulton R."/>
            <person name="Cordes M."/>
            <person name="Wollam A."/>
            <person name="Shah N."/>
            <person name="Pepin K."/>
            <person name="Bhonagiri V."/>
            <person name="Nash W."/>
            <person name="Johnson M."/>
            <person name="Thiruvilangam P."/>
            <person name="Wilson R."/>
        </authorList>
    </citation>
    <scope>NUCLEOTIDE SEQUENCE [LARGE SCALE GENOMIC DNA]</scope>
    <source>
        <strain>ATCC BAA-1250 / SPB7</strain>
    </source>
</reference>
<gene>
    <name evidence="1" type="primary">arnA</name>
    <name type="ordered locus">SPAB_00682</name>
</gene>
<proteinExistence type="inferred from homology"/>
<comment type="function">
    <text evidence="1">Bifunctional enzyme that catalyzes the oxidative decarboxylation of UDP-glucuronic acid (UDP-GlcUA) to UDP-4-keto-arabinose (UDP-Ara4O) and the addition of a formyl group to UDP-4-amino-4-deoxy-L-arabinose (UDP-L-Ara4N) to form UDP-L-4-formamido-arabinose (UDP-L-Ara4FN). The modified arabinose is attached to lipid A and is required for resistance to polymyxin and cationic antimicrobial peptides.</text>
</comment>
<comment type="catalytic activity">
    <reaction evidence="1">
        <text>UDP-alpha-D-glucuronate + NAD(+) = UDP-beta-L-threo-pentopyranos-4-ulose + CO2 + NADH</text>
        <dbReference type="Rhea" id="RHEA:24702"/>
        <dbReference type="ChEBI" id="CHEBI:16526"/>
        <dbReference type="ChEBI" id="CHEBI:57540"/>
        <dbReference type="ChEBI" id="CHEBI:57945"/>
        <dbReference type="ChEBI" id="CHEBI:58052"/>
        <dbReference type="ChEBI" id="CHEBI:58710"/>
        <dbReference type="EC" id="1.1.1.305"/>
    </reaction>
</comment>
<comment type="catalytic activity">
    <reaction evidence="1">
        <text>UDP-4-amino-4-deoxy-beta-L-arabinose + (6R)-10-formyltetrahydrofolate = UDP-4-deoxy-4-formamido-beta-L-arabinose + (6S)-5,6,7,8-tetrahydrofolate + H(+)</text>
        <dbReference type="Rhea" id="RHEA:24706"/>
        <dbReference type="ChEBI" id="CHEBI:15378"/>
        <dbReference type="ChEBI" id="CHEBI:57453"/>
        <dbReference type="ChEBI" id="CHEBI:58708"/>
        <dbReference type="ChEBI" id="CHEBI:58709"/>
        <dbReference type="ChEBI" id="CHEBI:195366"/>
        <dbReference type="EC" id="2.1.2.13"/>
    </reaction>
</comment>
<comment type="pathway">
    <text evidence="1">Nucleotide-sugar biosynthesis; UDP-4-deoxy-4-formamido-beta-L-arabinose biosynthesis; UDP-4-deoxy-4-formamido-beta-L-arabinose from UDP-alpha-D-glucuronate: step 1/3.</text>
</comment>
<comment type="pathway">
    <text evidence="1">Nucleotide-sugar biosynthesis; UDP-4-deoxy-4-formamido-beta-L-arabinose biosynthesis; UDP-4-deoxy-4-formamido-beta-L-arabinose from UDP-alpha-D-glucuronate: step 3/3.</text>
</comment>
<comment type="pathway">
    <text evidence="1">Bacterial outer membrane biogenesis; lipopolysaccharide biosynthesis.</text>
</comment>
<comment type="subunit">
    <text evidence="1">Homohexamer, formed by a dimer of trimers.</text>
</comment>
<comment type="similarity">
    <text evidence="1">In the N-terminal section; belongs to the Fmt family. UDP-L-Ara4N formyltransferase subfamily.</text>
</comment>
<comment type="similarity">
    <text evidence="1">In the C-terminal section; belongs to the NAD(P)-dependent epimerase/dehydratase family. UDP-glucuronic acid decarboxylase subfamily.</text>
</comment>
<evidence type="ECO:0000255" key="1">
    <source>
        <dbReference type="HAMAP-Rule" id="MF_01166"/>
    </source>
</evidence>
<name>ARNA_SALPB</name>